<name>LEU3_DEHM1</name>
<comment type="function">
    <text evidence="1">Catalyzes the oxidation of 3-carboxy-2-hydroxy-4-methylpentanoate (3-isopropylmalate) to 3-carboxy-4-methyl-2-oxopentanoate. The product decarboxylates to 4-methyl-2 oxopentanoate.</text>
</comment>
<comment type="catalytic activity">
    <reaction evidence="1">
        <text>(2R,3S)-3-isopropylmalate + NAD(+) = 4-methyl-2-oxopentanoate + CO2 + NADH</text>
        <dbReference type="Rhea" id="RHEA:32271"/>
        <dbReference type="ChEBI" id="CHEBI:16526"/>
        <dbReference type="ChEBI" id="CHEBI:17865"/>
        <dbReference type="ChEBI" id="CHEBI:35121"/>
        <dbReference type="ChEBI" id="CHEBI:57540"/>
        <dbReference type="ChEBI" id="CHEBI:57945"/>
        <dbReference type="EC" id="1.1.1.85"/>
    </reaction>
</comment>
<comment type="cofactor">
    <cofactor evidence="1">
        <name>Mg(2+)</name>
        <dbReference type="ChEBI" id="CHEBI:18420"/>
    </cofactor>
    <cofactor evidence="1">
        <name>Mn(2+)</name>
        <dbReference type="ChEBI" id="CHEBI:29035"/>
    </cofactor>
    <text evidence="1">Binds 1 Mg(2+) or Mn(2+) ion per subunit.</text>
</comment>
<comment type="pathway">
    <text evidence="1">Amino-acid biosynthesis; L-leucine biosynthesis; L-leucine from 3-methyl-2-oxobutanoate: step 3/4.</text>
</comment>
<comment type="subunit">
    <text evidence="1">Homodimer.</text>
</comment>
<comment type="subcellular location">
    <subcellularLocation>
        <location evidence="1">Cytoplasm</location>
    </subcellularLocation>
</comment>
<comment type="similarity">
    <text evidence="1">Belongs to the isocitrate and isopropylmalate dehydrogenases family. LeuB type 1 subfamily.</text>
</comment>
<feature type="chain" id="PRO_0000083685" description="3-isopropylmalate dehydrogenase">
    <location>
        <begin position="1"/>
        <end position="365"/>
    </location>
</feature>
<feature type="binding site" evidence="1">
    <location>
        <position position="96"/>
    </location>
    <ligand>
        <name>substrate</name>
    </ligand>
</feature>
<feature type="binding site" evidence="1">
    <location>
        <position position="106"/>
    </location>
    <ligand>
        <name>substrate</name>
    </ligand>
</feature>
<feature type="binding site" evidence="1">
    <location>
        <position position="134"/>
    </location>
    <ligand>
        <name>substrate</name>
    </ligand>
</feature>
<feature type="binding site" evidence="1">
    <location>
        <position position="224"/>
    </location>
    <ligand>
        <name>Mg(2+)</name>
        <dbReference type="ChEBI" id="CHEBI:18420"/>
    </ligand>
</feature>
<feature type="binding site" evidence="1">
    <location>
        <position position="224"/>
    </location>
    <ligand>
        <name>substrate</name>
    </ligand>
</feature>
<feature type="binding site" evidence="1">
    <location>
        <position position="248"/>
    </location>
    <ligand>
        <name>Mg(2+)</name>
        <dbReference type="ChEBI" id="CHEBI:18420"/>
    </ligand>
</feature>
<feature type="binding site" evidence="1">
    <location>
        <position position="252"/>
    </location>
    <ligand>
        <name>Mg(2+)</name>
        <dbReference type="ChEBI" id="CHEBI:18420"/>
    </ligand>
</feature>
<feature type="binding site" evidence="1">
    <location>
        <begin position="288"/>
        <end position="300"/>
    </location>
    <ligand>
        <name>NAD(+)</name>
        <dbReference type="ChEBI" id="CHEBI:57540"/>
    </ligand>
</feature>
<feature type="site" description="Important for catalysis" evidence="1">
    <location>
        <position position="141"/>
    </location>
</feature>
<feature type="site" description="Important for catalysis" evidence="1">
    <location>
        <position position="192"/>
    </location>
</feature>
<reference key="1">
    <citation type="journal article" date="2005" name="Science">
        <title>Genome sequence of the PCE-dechlorinating bacterium Dehalococcoides ethenogenes.</title>
        <authorList>
            <person name="Seshadri R."/>
            <person name="Adrian L."/>
            <person name="Fouts D.E."/>
            <person name="Eisen J.A."/>
            <person name="Phillippy A.M."/>
            <person name="Methe B.A."/>
            <person name="Ward N.L."/>
            <person name="Nelson W.C."/>
            <person name="DeBoy R.T."/>
            <person name="Khouri H.M."/>
            <person name="Kolonay J.F."/>
            <person name="Dodson R.J."/>
            <person name="Daugherty S.C."/>
            <person name="Brinkac L.M."/>
            <person name="Sullivan S.A."/>
            <person name="Madupu R."/>
            <person name="Nelson K.E."/>
            <person name="Kang K.H."/>
            <person name="Impraim M."/>
            <person name="Tran K."/>
            <person name="Robinson J.M."/>
            <person name="Forberger H.A."/>
            <person name="Fraser C.M."/>
            <person name="Zinder S.H."/>
            <person name="Heidelberg J.F."/>
        </authorList>
    </citation>
    <scope>NUCLEOTIDE SEQUENCE [LARGE SCALE GENOMIC DNA]</scope>
    <source>
        <strain>ATCC BAA-2266 / KCTC 15142 / 195</strain>
    </source>
</reference>
<sequence>MDFKLTVLPGDGIGPEVMAEGLKVLNAVAKKYKHSFEYQYGLIGGCCIDKEGVALSPETLAMCKKSDAVLLAAVGDPRFDDPKLPVHPEDGLLALRRGLGLFANIRPVKVAPSLVNSAPIKAEIVKGTDFIFIRELTGGVYFAKPKKRWTTPSGIRKATDSMTYSEKEIERIVRVGFELARSRKKKLVSVDKANVLLSSRLWRQIVIEIAKDYPDITVEHILVDACAMKLILAPTYFDVIVTENMFGDILTDEASMLAGSMGMLPSASLAGIPAKGTKTFGLYEPIHGSAPTIAKQNIANPIATILSIAMMLRYSCGLETEAAEIEAAVDKVLAAGYATIDIFKEGNTKLGTAEMGSQIAKIIGG</sequence>
<accession>Q3Z896</accession>
<evidence type="ECO:0000255" key="1">
    <source>
        <dbReference type="HAMAP-Rule" id="MF_01033"/>
    </source>
</evidence>
<organism>
    <name type="scientific">Dehalococcoides mccartyi (strain ATCC BAA-2266 / KCTC 15142 / 195)</name>
    <name type="common">Dehalococcoides ethenogenes (strain 195)</name>
    <dbReference type="NCBI Taxonomy" id="243164"/>
    <lineage>
        <taxon>Bacteria</taxon>
        <taxon>Bacillati</taxon>
        <taxon>Chloroflexota</taxon>
        <taxon>Dehalococcoidia</taxon>
        <taxon>Dehalococcoidales</taxon>
        <taxon>Dehalococcoidaceae</taxon>
        <taxon>Dehalococcoides</taxon>
    </lineage>
</organism>
<gene>
    <name evidence="1" type="primary">leuB</name>
    <name type="ordered locus">DET0826</name>
</gene>
<protein>
    <recommendedName>
        <fullName evidence="1">3-isopropylmalate dehydrogenase</fullName>
        <ecNumber evidence="1">1.1.1.85</ecNumber>
    </recommendedName>
    <alternativeName>
        <fullName evidence="1">3-IPM-DH</fullName>
    </alternativeName>
    <alternativeName>
        <fullName evidence="1">Beta-IPM dehydrogenase</fullName>
        <shortName evidence="1">IMDH</shortName>
    </alternativeName>
</protein>
<keyword id="KW-0028">Amino-acid biosynthesis</keyword>
<keyword id="KW-0100">Branched-chain amino acid biosynthesis</keyword>
<keyword id="KW-0963">Cytoplasm</keyword>
<keyword id="KW-0432">Leucine biosynthesis</keyword>
<keyword id="KW-0460">Magnesium</keyword>
<keyword id="KW-0464">Manganese</keyword>
<keyword id="KW-0479">Metal-binding</keyword>
<keyword id="KW-0520">NAD</keyword>
<keyword id="KW-0560">Oxidoreductase</keyword>
<dbReference type="EC" id="1.1.1.85" evidence="1"/>
<dbReference type="EMBL" id="CP000027">
    <property type="protein sequence ID" value="AAW39939.1"/>
    <property type="molecule type" value="Genomic_DNA"/>
</dbReference>
<dbReference type="RefSeq" id="WP_010936554.1">
    <property type="nucleotide sequence ID" value="NC_002936.3"/>
</dbReference>
<dbReference type="SMR" id="Q3Z896"/>
<dbReference type="FunCoup" id="Q3Z896">
    <property type="interactions" value="279"/>
</dbReference>
<dbReference type="STRING" id="243164.DET0826"/>
<dbReference type="GeneID" id="3229901"/>
<dbReference type="KEGG" id="det:DET0826"/>
<dbReference type="PATRIC" id="fig|243164.10.peg.784"/>
<dbReference type="eggNOG" id="COG0473">
    <property type="taxonomic scope" value="Bacteria"/>
</dbReference>
<dbReference type="HOGENOM" id="CLU_031953_0_3_0"/>
<dbReference type="InParanoid" id="Q3Z896"/>
<dbReference type="UniPathway" id="UPA00048">
    <property type="reaction ID" value="UER00072"/>
</dbReference>
<dbReference type="Proteomes" id="UP000008289">
    <property type="component" value="Chromosome"/>
</dbReference>
<dbReference type="GO" id="GO:0005829">
    <property type="term" value="C:cytosol"/>
    <property type="evidence" value="ECO:0007669"/>
    <property type="project" value="TreeGrafter"/>
</dbReference>
<dbReference type="GO" id="GO:0003862">
    <property type="term" value="F:3-isopropylmalate dehydrogenase activity"/>
    <property type="evidence" value="ECO:0007669"/>
    <property type="project" value="UniProtKB-UniRule"/>
</dbReference>
<dbReference type="GO" id="GO:0000287">
    <property type="term" value="F:magnesium ion binding"/>
    <property type="evidence" value="ECO:0007669"/>
    <property type="project" value="InterPro"/>
</dbReference>
<dbReference type="GO" id="GO:0051287">
    <property type="term" value="F:NAD binding"/>
    <property type="evidence" value="ECO:0007669"/>
    <property type="project" value="InterPro"/>
</dbReference>
<dbReference type="GO" id="GO:0009098">
    <property type="term" value="P:L-leucine biosynthetic process"/>
    <property type="evidence" value="ECO:0007669"/>
    <property type="project" value="UniProtKB-UniRule"/>
</dbReference>
<dbReference type="FunFam" id="3.40.718.10:FF:000006">
    <property type="entry name" value="3-isopropylmalate dehydrogenase"/>
    <property type="match status" value="1"/>
</dbReference>
<dbReference type="Gene3D" id="3.40.718.10">
    <property type="entry name" value="Isopropylmalate Dehydrogenase"/>
    <property type="match status" value="1"/>
</dbReference>
<dbReference type="HAMAP" id="MF_01033">
    <property type="entry name" value="LeuB_type1"/>
    <property type="match status" value="1"/>
</dbReference>
<dbReference type="InterPro" id="IPR019818">
    <property type="entry name" value="IsoCit/isopropylmalate_DH_CS"/>
</dbReference>
<dbReference type="InterPro" id="IPR024084">
    <property type="entry name" value="IsoPropMal-DH-like_dom"/>
</dbReference>
<dbReference type="InterPro" id="IPR004429">
    <property type="entry name" value="Isopropylmalate_DH"/>
</dbReference>
<dbReference type="NCBIfam" id="TIGR00169">
    <property type="entry name" value="leuB"/>
    <property type="match status" value="1"/>
</dbReference>
<dbReference type="PANTHER" id="PTHR42979">
    <property type="entry name" value="3-ISOPROPYLMALATE DEHYDROGENASE"/>
    <property type="match status" value="1"/>
</dbReference>
<dbReference type="PANTHER" id="PTHR42979:SF1">
    <property type="entry name" value="3-ISOPROPYLMALATE DEHYDROGENASE"/>
    <property type="match status" value="1"/>
</dbReference>
<dbReference type="Pfam" id="PF00180">
    <property type="entry name" value="Iso_dh"/>
    <property type="match status" value="1"/>
</dbReference>
<dbReference type="SMART" id="SM01329">
    <property type="entry name" value="Iso_dh"/>
    <property type="match status" value="1"/>
</dbReference>
<dbReference type="SUPFAM" id="SSF53659">
    <property type="entry name" value="Isocitrate/Isopropylmalate dehydrogenase-like"/>
    <property type="match status" value="1"/>
</dbReference>
<dbReference type="PROSITE" id="PS00470">
    <property type="entry name" value="IDH_IMDH"/>
    <property type="match status" value="1"/>
</dbReference>
<proteinExistence type="inferred from homology"/>